<feature type="peptide" id="PRO_0000421703" description="Corazonin" evidence="3">
    <location>
        <begin position="1"/>
        <end position="11"/>
    </location>
</feature>
<feature type="modified residue" description="Pyrrolidone carboxylic acid" evidence="3">
    <location>
        <position position="1"/>
    </location>
</feature>
<feature type="modified residue" description="Asparagine amide" evidence="3">
    <location>
        <position position="11"/>
    </location>
</feature>
<sequence length="11" mass="1368">QTFHYSQGWTN</sequence>
<accession>B3A0D5</accession>
<reference evidence="5" key="1">
    <citation type="journal article" date="2012" name="Syst. Biol.">
        <title>Peptidomics-based phylogeny and biogeography of Mantophasmatodea (Hexapoda).</title>
        <authorList>
            <person name="Predel R."/>
            <person name="Neupert S."/>
            <person name="Huetteroth W."/>
            <person name="Kahnt J."/>
            <person name="Waidelich D."/>
            <person name="Roth S."/>
        </authorList>
    </citation>
    <scope>PROTEIN SEQUENCE</scope>
    <scope>PYROGLUTAMATE FORMATION AT GLN-1</scope>
    <scope>AMIDATION AT ASN-11</scope>
    <source>
        <tissue evidence="3">Corpora cardiaca</tissue>
    </source>
</reference>
<organism>
    <name type="scientific">Hemilobophasma montaguense</name>
    <name type="common">Gladiator</name>
    <name type="synonym">Heel-walker</name>
    <dbReference type="NCBI Taxonomy" id="253130"/>
    <lineage>
        <taxon>Eukaryota</taxon>
        <taxon>Metazoa</taxon>
        <taxon>Ecdysozoa</taxon>
        <taxon>Arthropoda</taxon>
        <taxon>Hexapoda</taxon>
        <taxon>Insecta</taxon>
        <taxon>Pterygota</taxon>
        <taxon>Neoptera</taxon>
        <taxon>Polyneoptera</taxon>
        <taxon>Mantophasmatodea</taxon>
        <taxon>Austrophasmatidae</taxon>
        <taxon>Hemilobophasma</taxon>
    </lineage>
</organism>
<comment type="function">
    <text evidence="1">Cardioactive peptide. Corazonin is probably involved in the physiological regulation of the heart beat (By similarity).</text>
</comment>
<comment type="subcellular location">
    <subcellularLocation>
        <location evidence="6">Secreted</location>
    </subcellularLocation>
</comment>
<comment type="similarity">
    <text evidence="2">Belongs to the corazonin family.</text>
</comment>
<proteinExistence type="evidence at protein level"/>
<dbReference type="GO" id="GO:0005576">
    <property type="term" value="C:extracellular region"/>
    <property type="evidence" value="ECO:0007669"/>
    <property type="project" value="UniProtKB-SubCell"/>
</dbReference>
<dbReference type="GO" id="GO:0007218">
    <property type="term" value="P:neuropeptide signaling pathway"/>
    <property type="evidence" value="ECO:0007669"/>
    <property type="project" value="UniProtKB-KW"/>
</dbReference>
<protein>
    <recommendedName>
        <fullName evidence="4">Corazonin</fullName>
    </recommendedName>
</protein>
<name>CORZ_HEMMO</name>
<keyword id="KW-0027">Amidation</keyword>
<keyword id="KW-0903">Direct protein sequencing</keyword>
<keyword id="KW-0527">Neuropeptide</keyword>
<keyword id="KW-0873">Pyrrolidone carboxylic acid</keyword>
<keyword id="KW-0964">Secreted</keyword>
<evidence type="ECO:0000250" key="1">
    <source>
        <dbReference type="UniProtKB" id="Q26377"/>
    </source>
</evidence>
<evidence type="ECO:0000255" key="2"/>
<evidence type="ECO:0000269" key="3">
    <source>
    </source>
</evidence>
<evidence type="ECO:0000303" key="4">
    <source>
    </source>
</evidence>
<evidence type="ECO:0000305" key="5"/>
<evidence type="ECO:0000305" key="6">
    <source>
    </source>
</evidence>